<sequence>MTSSPFLDPWPSKAVFVRERLGLGERPNDSYCYNSAKNSTVLQGVTFGGIPTVLLLDVSCFLFLILVFSIIRRRFWDYGRIALVSEAGSEARFQRLSSSSSGQQDFENELGCCPWLTAIFRLHDDQILEWCGEDAIHYLSFQRHIIFLLVVISFLSLCVILPVNLSGDLLGKDPYSFGRTTIANLQTDNDLLWLHTVFSVIYLFLTVGFMWHHTRSIRYKEESLVRQTLFITGLPREARKETVESHFRDAYPTCEVVDVQLCYSVAKLIYLCKERKKTEKSLTYYTNLQAKTGRRTLINPKPCGQFCCCEVQGCEREDAISYYTRMNDSLLERITAEESRVQDQPLGMAFVTFREKSMATYILKDFNACKCQGLRCKGEPQPSSYSRELCVSKWTVTFASYPEDICWKNLSIQGVRWWLQWLGINFSLFVVLFFLTTPSIIMSTMDKFNVTKPIHALNNPVISQFFPTLLLWSFSALLPSIVYYSTLLESHWTRSGENRIMVSKVYIFLIFMVLILPSLGLTSLDFFFRWLFDKTSSETSIRLECVFLPDQGAFFVNYVIASAFIGSGMELLRLPGLILYTFRMIMAKTAADRRNVKQNQAFEYEFGAMYAWMLCVFTVIMAYSITCPIIVPFGLIYILLKHMVDRHNLYFAYLPAKLEKRIHFAAVNQALAAPILCLFWLFFFSFLRLGLTAPATLFTFLVVLLTILACLLYTCFGCFKHLSPWNYKTEESASDKGSEAEAHVPPPFTPYVPRILNGLASERTALSPQQQQTYGAIRNISGTLPGQPVAQDPSGTAAYAYQES</sequence>
<reference key="1">
    <citation type="journal article" date="2004" name="DNA Res.">
        <title>Prediction of the coding sequences of mouse homologues of KIAA gene: IV. The complete nucleotide sequences of 500 mouse KIAA-homologous cDNAs identified by screening of terminal sequences of cDNA clones randomly sampled from size-fractionated libraries.</title>
        <authorList>
            <person name="Okazaki N."/>
            <person name="Kikuno R."/>
            <person name="Ohara R."/>
            <person name="Inamoto S."/>
            <person name="Koseki H."/>
            <person name="Hiraoka S."/>
            <person name="Saga Y."/>
            <person name="Seino S."/>
            <person name="Nishimura M."/>
            <person name="Kaisho T."/>
            <person name="Hoshino K."/>
            <person name="Kitamura H."/>
            <person name="Nagase T."/>
            <person name="Ohara O."/>
            <person name="Koga H."/>
        </authorList>
    </citation>
    <scope>NUCLEOTIDE SEQUENCE [LARGE SCALE MRNA]</scope>
    <source>
        <strain>NOD</strain>
        <tissue>Pancreatic islet</tissue>
    </source>
</reference>
<reference key="2">
    <citation type="journal article" date="2005" name="Science">
        <title>The transcriptional landscape of the mammalian genome.</title>
        <authorList>
            <person name="Carninci P."/>
            <person name="Kasukawa T."/>
            <person name="Katayama S."/>
            <person name="Gough J."/>
            <person name="Frith M.C."/>
            <person name="Maeda N."/>
            <person name="Oyama R."/>
            <person name="Ravasi T."/>
            <person name="Lenhard B."/>
            <person name="Wells C."/>
            <person name="Kodzius R."/>
            <person name="Shimokawa K."/>
            <person name="Bajic V.B."/>
            <person name="Brenner S.E."/>
            <person name="Batalov S."/>
            <person name="Forrest A.R."/>
            <person name="Zavolan M."/>
            <person name="Davis M.J."/>
            <person name="Wilming L.G."/>
            <person name="Aidinis V."/>
            <person name="Allen J.E."/>
            <person name="Ambesi-Impiombato A."/>
            <person name="Apweiler R."/>
            <person name="Aturaliya R.N."/>
            <person name="Bailey T.L."/>
            <person name="Bansal M."/>
            <person name="Baxter L."/>
            <person name="Beisel K.W."/>
            <person name="Bersano T."/>
            <person name="Bono H."/>
            <person name="Chalk A.M."/>
            <person name="Chiu K.P."/>
            <person name="Choudhary V."/>
            <person name="Christoffels A."/>
            <person name="Clutterbuck D.R."/>
            <person name="Crowe M.L."/>
            <person name="Dalla E."/>
            <person name="Dalrymple B.P."/>
            <person name="de Bono B."/>
            <person name="Della Gatta G."/>
            <person name="di Bernardo D."/>
            <person name="Down T."/>
            <person name="Engstrom P."/>
            <person name="Fagiolini M."/>
            <person name="Faulkner G."/>
            <person name="Fletcher C.F."/>
            <person name="Fukushima T."/>
            <person name="Furuno M."/>
            <person name="Futaki S."/>
            <person name="Gariboldi M."/>
            <person name="Georgii-Hemming P."/>
            <person name="Gingeras T.R."/>
            <person name="Gojobori T."/>
            <person name="Green R.E."/>
            <person name="Gustincich S."/>
            <person name="Harbers M."/>
            <person name="Hayashi Y."/>
            <person name="Hensch T.K."/>
            <person name="Hirokawa N."/>
            <person name="Hill D."/>
            <person name="Huminiecki L."/>
            <person name="Iacono M."/>
            <person name="Ikeo K."/>
            <person name="Iwama A."/>
            <person name="Ishikawa T."/>
            <person name="Jakt M."/>
            <person name="Kanapin A."/>
            <person name="Katoh M."/>
            <person name="Kawasawa Y."/>
            <person name="Kelso J."/>
            <person name="Kitamura H."/>
            <person name="Kitano H."/>
            <person name="Kollias G."/>
            <person name="Krishnan S.P."/>
            <person name="Kruger A."/>
            <person name="Kummerfeld S.K."/>
            <person name="Kurochkin I.V."/>
            <person name="Lareau L.F."/>
            <person name="Lazarevic D."/>
            <person name="Lipovich L."/>
            <person name="Liu J."/>
            <person name="Liuni S."/>
            <person name="McWilliam S."/>
            <person name="Madan Babu M."/>
            <person name="Madera M."/>
            <person name="Marchionni L."/>
            <person name="Matsuda H."/>
            <person name="Matsuzawa S."/>
            <person name="Miki H."/>
            <person name="Mignone F."/>
            <person name="Miyake S."/>
            <person name="Morris K."/>
            <person name="Mottagui-Tabar S."/>
            <person name="Mulder N."/>
            <person name="Nakano N."/>
            <person name="Nakauchi H."/>
            <person name="Ng P."/>
            <person name="Nilsson R."/>
            <person name="Nishiguchi S."/>
            <person name="Nishikawa S."/>
            <person name="Nori F."/>
            <person name="Ohara O."/>
            <person name="Okazaki Y."/>
            <person name="Orlando V."/>
            <person name="Pang K.C."/>
            <person name="Pavan W.J."/>
            <person name="Pavesi G."/>
            <person name="Pesole G."/>
            <person name="Petrovsky N."/>
            <person name="Piazza S."/>
            <person name="Reed J."/>
            <person name="Reid J.F."/>
            <person name="Ring B.Z."/>
            <person name="Ringwald M."/>
            <person name="Rost B."/>
            <person name="Ruan Y."/>
            <person name="Salzberg S.L."/>
            <person name="Sandelin A."/>
            <person name="Schneider C."/>
            <person name="Schoenbach C."/>
            <person name="Sekiguchi K."/>
            <person name="Semple C.A."/>
            <person name="Seno S."/>
            <person name="Sessa L."/>
            <person name="Sheng Y."/>
            <person name="Shibata Y."/>
            <person name="Shimada H."/>
            <person name="Shimada K."/>
            <person name="Silva D."/>
            <person name="Sinclair B."/>
            <person name="Sperling S."/>
            <person name="Stupka E."/>
            <person name="Sugiura K."/>
            <person name="Sultana R."/>
            <person name="Takenaka Y."/>
            <person name="Taki K."/>
            <person name="Tammoja K."/>
            <person name="Tan S.L."/>
            <person name="Tang S."/>
            <person name="Taylor M.S."/>
            <person name="Tegner J."/>
            <person name="Teichmann S.A."/>
            <person name="Ueda H.R."/>
            <person name="van Nimwegen E."/>
            <person name="Verardo R."/>
            <person name="Wei C.L."/>
            <person name="Yagi K."/>
            <person name="Yamanishi H."/>
            <person name="Zabarovsky E."/>
            <person name="Zhu S."/>
            <person name="Zimmer A."/>
            <person name="Hide W."/>
            <person name="Bult C."/>
            <person name="Grimmond S.M."/>
            <person name="Teasdale R.D."/>
            <person name="Liu E.T."/>
            <person name="Brusic V."/>
            <person name="Quackenbush J."/>
            <person name="Wahlestedt C."/>
            <person name="Mattick J.S."/>
            <person name="Hume D.A."/>
            <person name="Kai C."/>
            <person name="Sasaki D."/>
            <person name="Tomaru Y."/>
            <person name="Fukuda S."/>
            <person name="Kanamori-Katayama M."/>
            <person name="Suzuki M."/>
            <person name="Aoki J."/>
            <person name="Arakawa T."/>
            <person name="Iida J."/>
            <person name="Imamura K."/>
            <person name="Itoh M."/>
            <person name="Kato T."/>
            <person name="Kawaji H."/>
            <person name="Kawagashira N."/>
            <person name="Kawashima T."/>
            <person name="Kojima M."/>
            <person name="Kondo S."/>
            <person name="Konno H."/>
            <person name="Nakano K."/>
            <person name="Ninomiya N."/>
            <person name="Nishio T."/>
            <person name="Okada M."/>
            <person name="Plessy C."/>
            <person name="Shibata K."/>
            <person name="Shiraki T."/>
            <person name="Suzuki S."/>
            <person name="Tagami M."/>
            <person name="Waki K."/>
            <person name="Watahiki A."/>
            <person name="Okamura-Oho Y."/>
            <person name="Suzuki H."/>
            <person name="Kawai J."/>
            <person name="Hayashizaki Y."/>
        </authorList>
    </citation>
    <scope>NUCLEOTIDE SEQUENCE [LARGE SCALE MRNA]</scope>
    <source>
        <tissue>Lung</tissue>
    </source>
</reference>
<reference key="3">
    <citation type="journal article" date="2004" name="Genome Res.">
        <title>The status, quality, and expansion of the NIH full-length cDNA project: the Mammalian Gene Collection (MGC).</title>
        <authorList>
            <consortium name="The MGC Project Team"/>
        </authorList>
    </citation>
    <scope>NUCLEOTIDE SEQUENCE [LARGE SCALE MRNA]</scope>
    <source>
        <strain>FVB/N</strain>
        <tissue>Mammary tumor</tissue>
    </source>
</reference>
<reference key="4">
    <citation type="journal article" date="2010" name="Cell">
        <title>A tissue-specific atlas of mouse protein phosphorylation and expression.</title>
        <authorList>
            <person name="Huttlin E.L."/>
            <person name="Jedrychowski M.P."/>
            <person name="Elias J.E."/>
            <person name="Goswami T."/>
            <person name="Rad R."/>
            <person name="Beausoleil S.A."/>
            <person name="Villen J."/>
            <person name="Haas W."/>
            <person name="Sowa M.E."/>
            <person name="Gygi S.P."/>
        </authorList>
    </citation>
    <scope>PHOSPHORYLATION [LARGE SCALE ANALYSIS] AT SER-738</scope>
    <scope>IDENTIFICATION BY MASS SPECTROMETRY [LARGE SCALE ANALYSIS]</scope>
    <source>
        <tissue>Kidney</tissue>
        <tissue>Lung</tissue>
        <tissue>Pancreas</tissue>
        <tissue>Spleen</tissue>
    </source>
</reference>
<reference key="5">
    <citation type="journal article" date="2016" name="Cell Biochem. Funct.">
        <title>Co-expression of mouse TMEM63A, TMEM63B and TMEM63C confers hyperosmolarity activated ion currents in HEK293 cells.</title>
        <authorList>
            <person name="Zhao X."/>
            <person name="Yan X."/>
            <person name="Liu Y."/>
            <person name="Zhang P."/>
            <person name="Ni X."/>
        </authorList>
    </citation>
    <scope>FUNCTION</scope>
    <scope>SUBCELLULAR LOCATION</scope>
</reference>
<reference key="6">
    <citation type="journal article" date="2018" name="Elife">
        <title>OSCA/TMEM63 are an Evolutionarily Conserved Family of Mechanically Activated Ion Channels.</title>
        <authorList>
            <person name="Murthy S.E."/>
            <person name="Dubin A.E."/>
            <person name="Whitwam T."/>
            <person name="Jojoa-Cruz S."/>
            <person name="Cahalan S.M."/>
            <person name="Mousavi S.A.R."/>
            <person name="Ward A.B."/>
            <person name="Patapoutian A."/>
        </authorList>
    </citation>
    <scope>FUNCTION</scope>
    <scope>SUBCELLULAR LOCATION</scope>
</reference>
<reference key="7">
    <citation type="journal article" date="2020" name="Cell Rep.">
        <title>The Cation Channel TMEM63B Is an Osmosensor Required for Hearing.</title>
        <authorList>
            <person name="Du H."/>
            <person name="Ye C."/>
            <person name="Wu D."/>
            <person name="Zang Y.Y."/>
            <person name="Zhang L."/>
            <person name="Chen C."/>
            <person name="He X.Y."/>
            <person name="Yang J.J."/>
            <person name="Hu P."/>
            <person name="Xu Z."/>
            <person name="Wan G."/>
            <person name="Shi Y.S."/>
        </authorList>
    </citation>
    <scope>FUNCTION</scope>
    <scope>TRANSPORTER ACTIVITY</scope>
</reference>
<reference key="8">
    <citation type="journal article" date="2023" name="Neuron">
        <title>TMEM63 proteins function as monomeric high-threshold mechanosensitive ion channels.</title>
        <authorList>
            <person name="Zheng W."/>
            <person name="Rawson S."/>
            <person name="Shen Z."/>
            <person name="Tamilselvan E."/>
            <person name="Smith H.E."/>
            <person name="Halford J."/>
            <person name="Shen C."/>
            <person name="Murthy S.E."/>
            <person name="Ulbrich M.H."/>
            <person name="Sotomayor M."/>
            <person name="Fu T.M."/>
            <person name="Holt J.R."/>
        </authorList>
    </citation>
    <scope>FUNCTION</scope>
    <scope>SUBUNIT</scope>
    <scope>SUBCELLULAR LOCATION</scope>
</reference>
<reference key="9">
    <citation type="journal article" date="2024" name="J. Clin. Invest.">
        <title>Mechanosensitive channels TMEM63A and TMEM63B mediate lung inflation-induced surfactant secretion.</title>
        <authorList>
            <person name="Chen G.L."/>
            <person name="Li J.Y."/>
            <person name="Chen X."/>
            <person name="Liu J.W."/>
            <person name="Zhang Q."/>
            <person name="Liu J.Y."/>
            <person name="Wen J."/>
            <person name="Wang N."/>
            <person name="Lei M."/>
            <person name="Wei J.P."/>
            <person name="Yi L."/>
            <person name="Li J.J."/>
            <person name="Ling Y.P."/>
            <person name="Yi H.Q."/>
            <person name="Hu Z."/>
            <person name="Duan J."/>
            <person name="Zhang J."/>
            <person name="Zeng B."/>
        </authorList>
    </citation>
    <scope>FUNCTION</scope>
    <scope>DISRUPTION PHENOTYPE</scope>
</reference>
<reference key="10">
    <citation type="journal article" date="2024" name="Elife">
        <title>TMEM16 and OSCA/TMEM63 proteins share a conserved potential to permeate ions and phospholipids.</title>
        <authorList>
            <person name="Lowry A.J."/>
            <person name="Liang P."/>
            <person name="Song M."/>
            <person name="Wan Y."/>
            <person name="Pei Z.M."/>
            <person name="Yang H."/>
            <person name="Zhang Y."/>
        </authorList>
    </citation>
    <scope>MUTAGENESIS OF TRP-472; SER-475 AND ALA-476</scope>
</reference>
<reference key="11">
    <citation type="journal article" date="2024" name="Nat. Cell Biol.">
        <title>Drosophila TMEM63 and mouse TMEM63A are lysosomal mechanosensory ion channels.</title>
        <authorList>
            <person name="Li K."/>
            <person name="Guo Y."/>
            <person name="Wang Y."/>
            <person name="Zhu R."/>
            <person name="Chen W."/>
            <person name="Cheng T."/>
            <person name="Zhang X."/>
            <person name="Jia Y."/>
            <person name="Liu T."/>
            <person name="Zhang W."/>
            <person name="Jan L.Y."/>
            <person name="Jan Y.N."/>
        </authorList>
    </citation>
    <scope>FUNCTION</scope>
    <scope>SUBCELLULAR LOCATION</scope>
</reference>
<name>TM63A_MOUSE</name>
<protein>
    <recommendedName>
        <fullName evidence="13">Mechanosensitive cation channel TMEM63A</fullName>
    </recommendedName>
    <alternativeName>
        <fullName>Transmembrane protein 63A</fullName>
    </alternativeName>
</protein>
<organism>
    <name type="scientific">Mus musculus</name>
    <name type="common">Mouse</name>
    <dbReference type="NCBI Taxonomy" id="10090"/>
    <lineage>
        <taxon>Eukaryota</taxon>
        <taxon>Metazoa</taxon>
        <taxon>Chordata</taxon>
        <taxon>Craniata</taxon>
        <taxon>Vertebrata</taxon>
        <taxon>Euteleostomi</taxon>
        <taxon>Mammalia</taxon>
        <taxon>Eutheria</taxon>
        <taxon>Euarchontoglires</taxon>
        <taxon>Glires</taxon>
        <taxon>Rodentia</taxon>
        <taxon>Myomorpha</taxon>
        <taxon>Muroidea</taxon>
        <taxon>Muridae</taxon>
        <taxon>Murinae</taxon>
        <taxon>Mus</taxon>
        <taxon>Mus</taxon>
    </lineage>
</organism>
<gene>
    <name evidence="12 15" type="primary">Tmem63a</name>
    <name evidence="11" type="synonym">Kiaa0792</name>
</gene>
<accession>Q91YT8</accession>
<accession>Q3TCS5</accession>
<accession>Q69ZZ1</accession>
<comment type="function">
    <text evidence="1 4 5 6 7 8 9">Mechanosensitive cation channel with low conductance and high activation threshold (PubMed:30382938, PubMed:37543036). In contrast to TMEM63B, does not show phospholipid scramblase activity (By similarity). Acts as a regulator of lysosomal morphology by mediating lysosomal mechanosensitivity (PubMed:38388853). Important for the baby's first breath and respiration throughout life (PubMed:38127458). Upon lung inflation conducts cation currents in alveolar type 1 and 2 cells triggering lamellar body exocytosis and surfactant secretion into airspace (PubMed:38127458). Also acts as an osmosensitive cation channel preferentially activated by hypotonic stress (PubMed:27045885, PubMed:32375046).</text>
</comment>
<comment type="catalytic activity">
    <reaction evidence="14">
        <text>Ca(2+)(in) = Ca(2+)(out)</text>
        <dbReference type="Rhea" id="RHEA:29671"/>
        <dbReference type="ChEBI" id="CHEBI:29108"/>
    </reaction>
</comment>
<comment type="subunit">
    <text evidence="7">Monomer.</text>
</comment>
<comment type="subcellular location">
    <subcellularLocation>
        <location evidence="9">Lysosome membrane</location>
        <topology evidence="2">Multi-pass membrane protein</topology>
    </subcellularLocation>
    <subcellularLocation>
        <location evidence="1">Early endosome membrane</location>
        <topology evidence="2">Multi-pass membrane protein</topology>
    </subcellularLocation>
    <subcellularLocation>
        <location evidence="4 5 7">Cell membrane</location>
        <topology evidence="2">Multi-pass membrane protein</topology>
    </subcellularLocation>
</comment>
<comment type="PTM">
    <text evidence="1">N-Glycosylated.</text>
</comment>
<comment type="disruption phenotype">
    <text evidence="8">Mice are all viable from the neonatal to late adult stages. Double knockout of Tmem63a and Tmem63b results in lethality at birth due to impaired alveolar expansion and respiratory failure.</text>
</comment>
<comment type="similarity">
    <text evidence="13">Belongs to the CSC1 (TC 1.A.17) family.</text>
</comment>
<comment type="sequence caution" evidence="13">
    <conflict type="erroneous initiation">
        <sequence resource="EMBL-CDS" id="BAD32305"/>
    </conflict>
    <text>Extended N-terminus.</text>
</comment>
<comment type="sequence caution" evidence="13">
    <conflict type="erroneous termination">
        <sequence resource="EMBL-CDS" id="BAE41880"/>
    </conflict>
    <text>Truncated C-terminus.</text>
</comment>
<dbReference type="EMBL" id="AK173027">
    <property type="protein sequence ID" value="BAD32305.1"/>
    <property type="status" value="ALT_INIT"/>
    <property type="molecule type" value="mRNA"/>
</dbReference>
<dbReference type="EMBL" id="AK144899">
    <property type="protein sequence ID" value="BAE26121.1"/>
    <property type="molecule type" value="mRNA"/>
</dbReference>
<dbReference type="EMBL" id="AK170559">
    <property type="protein sequence ID" value="BAE41880.1"/>
    <property type="status" value="ALT_SEQ"/>
    <property type="molecule type" value="mRNA"/>
</dbReference>
<dbReference type="EMBL" id="BC014795">
    <property type="protein sequence ID" value="AAH14795.1"/>
    <property type="molecule type" value="mRNA"/>
</dbReference>
<dbReference type="EMBL" id="BC019442">
    <property type="protein sequence ID" value="AAH19442.1"/>
    <property type="molecule type" value="mRNA"/>
</dbReference>
<dbReference type="CCDS" id="CCDS15578.1"/>
<dbReference type="RefSeq" id="NP_001404481.1">
    <property type="nucleotide sequence ID" value="NM_001417552.1"/>
</dbReference>
<dbReference type="RefSeq" id="NP_001404482.1">
    <property type="nucleotide sequence ID" value="NM_001417553.1"/>
</dbReference>
<dbReference type="RefSeq" id="NP_001404483.1">
    <property type="nucleotide sequence ID" value="NM_001417554.1"/>
</dbReference>
<dbReference type="RefSeq" id="NP_659043.1">
    <property type="nucleotide sequence ID" value="NM_144794.3"/>
</dbReference>
<dbReference type="RefSeq" id="XP_006496784.1">
    <property type="nucleotide sequence ID" value="XM_006496721.3"/>
</dbReference>
<dbReference type="RefSeq" id="XP_006496785.1">
    <property type="nucleotide sequence ID" value="XM_006496722.4"/>
</dbReference>
<dbReference type="RefSeq" id="XP_006496786.1">
    <property type="nucleotide sequence ID" value="XM_006496723.3"/>
</dbReference>
<dbReference type="SMR" id="Q91YT8"/>
<dbReference type="BioGRID" id="229015">
    <property type="interactions" value="1"/>
</dbReference>
<dbReference type="FunCoup" id="Q91YT8">
    <property type="interactions" value="335"/>
</dbReference>
<dbReference type="STRING" id="10090.ENSMUSP00000027800"/>
<dbReference type="GlyGen" id="Q91YT8">
    <property type="glycosylation" value="6 sites, 3 N-linked glycans (3 sites), 1 O-linked glycan (1 site)"/>
</dbReference>
<dbReference type="iPTMnet" id="Q91YT8"/>
<dbReference type="PhosphoSitePlus" id="Q91YT8"/>
<dbReference type="SwissPalm" id="Q91YT8"/>
<dbReference type="PaxDb" id="10090-ENSMUSP00000027800"/>
<dbReference type="PeptideAtlas" id="Q91YT8"/>
<dbReference type="ProteomicsDB" id="279069"/>
<dbReference type="Pumba" id="Q91YT8"/>
<dbReference type="Antibodypedia" id="34647">
    <property type="antibodies" value="70 antibodies from 15 providers"/>
</dbReference>
<dbReference type="DNASU" id="208795"/>
<dbReference type="Ensembl" id="ENSMUST00000027800.15">
    <property type="protein sequence ID" value="ENSMUSP00000027800.9"/>
    <property type="gene ID" value="ENSMUSG00000026519.17"/>
</dbReference>
<dbReference type="Ensembl" id="ENSMUST00000161523.8">
    <property type="protein sequence ID" value="ENSMUSP00000124021.2"/>
    <property type="gene ID" value="ENSMUSG00000026519.17"/>
</dbReference>
<dbReference type="GeneID" id="208795"/>
<dbReference type="KEGG" id="mmu:208795"/>
<dbReference type="UCSC" id="uc007dwx.1">
    <property type="organism name" value="mouse"/>
</dbReference>
<dbReference type="AGR" id="MGI:2384789"/>
<dbReference type="CTD" id="9725"/>
<dbReference type="MGI" id="MGI:2384789">
    <property type="gene designation" value="Tmem63a"/>
</dbReference>
<dbReference type="VEuPathDB" id="HostDB:ENSMUSG00000026519"/>
<dbReference type="eggNOG" id="KOG1134">
    <property type="taxonomic scope" value="Eukaryota"/>
</dbReference>
<dbReference type="GeneTree" id="ENSGT00940000159576"/>
<dbReference type="HOGENOM" id="CLU_015647_2_0_1"/>
<dbReference type="InParanoid" id="Q91YT8"/>
<dbReference type="OMA" id="DPTQVIW"/>
<dbReference type="OrthoDB" id="1689567at2759"/>
<dbReference type="PhylomeDB" id="Q91YT8"/>
<dbReference type="TreeFam" id="TF324300"/>
<dbReference type="Reactome" id="R-MMU-6798695">
    <property type="pathway name" value="Neutrophil degranulation"/>
</dbReference>
<dbReference type="BioGRID-ORCS" id="208795">
    <property type="hits" value="1 hit in 78 CRISPR screens"/>
</dbReference>
<dbReference type="ChiTaRS" id="Tmem63a">
    <property type="organism name" value="mouse"/>
</dbReference>
<dbReference type="PRO" id="PR:Q91YT8"/>
<dbReference type="Proteomes" id="UP000000589">
    <property type="component" value="Chromosome 1"/>
</dbReference>
<dbReference type="RNAct" id="Q91YT8">
    <property type="molecule type" value="protein"/>
</dbReference>
<dbReference type="Bgee" id="ENSMUSG00000026519">
    <property type="expression patterns" value="Expressed in ascending aorta and 209 other cell types or tissues"/>
</dbReference>
<dbReference type="ExpressionAtlas" id="Q91YT8">
    <property type="expression patterns" value="baseline and differential"/>
</dbReference>
<dbReference type="GO" id="GO:0034451">
    <property type="term" value="C:centriolar satellite"/>
    <property type="evidence" value="ECO:0007669"/>
    <property type="project" value="Ensembl"/>
</dbReference>
<dbReference type="GO" id="GO:0031901">
    <property type="term" value="C:early endosome membrane"/>
    <property type="evidence" value="ECO:0007669"/>
    <property type="project" value="UniProtKB-SubCell"/>
</dbReference>
<dbReference type="GO" id="GO:0005765">
    <property type="term" value="C:lysosomal membrane"/>
    <property type="evidence" value="ECO:0000314"/>
    <property type="project" value="UniProtKB"/>
</dbReference>
<dbReference type="GO" id="GO:0005886">
    <property type="term" value="C:plasma membrane"/>
    <property type="evidence" value="ECO:0000314"/>
    <property type="project" value="UniProtKB"/>
</dbReference>
<dbReference type="GO" id="GO:0005227">
    <property type="term" value="F:calcium-activated cation channel activity"/>
    <property type="evidence" value="ECO:0007669"/>
    <property type="project" value="InterPro"/>
</dbReference>
<dbReference type="GO" id="GO:0008381">
    <property type="term" value="F:mechanosensitive monoatomic ion channel activity"/>
    <property type="evidence" value="ECO:0000314"/>
    <property type="project" value="UniProtKB"/>
</dbReference>
<dbReference type="GO" id="GO:0003676">
    <property type="term" value="F:nucleic acid binding"/>
    <property type="evidence" value="ECO:0007669"/>
    <property type="project" value="InterPro"/>
</dbReference>
<dbReference type="GO" id="GO:1990760">
    <property type="term" value="F:osmolarity-sensing monoatomic cation channel activity"/>
    <property type="evidence" value="ECO:0000314"/>
    <property type="project" value="UniProtKB"/>
</dbReference>
<dbReference type="GO" id="GO:0007040">
    <property type="term" value="P:lysosome organization"/>
    <property type="evidence" value="ECO:0000314"/>
    <property type="project" value="UniProtKB"/>
</dbReference>
<dbReference type="GO" id="GO:0160069">
    <property type="term" value="P:surfactant secretion"/>
    <property type="evidence" value="ECO:0000315"/>
    <property type="project" value="UniProtKB"/>
</dbReference>
<dbReference type="Gene3D" id="3.30.70.330">
    <property type="match status" value="1"/>
</dbReference>
<dbReference type="InterPro" id="IPR045122">
    <property type="entry name" value="Csc1-like"/>
</dbReference>
<dbReference type="InterPro" id="IPR003864">
    <property type="entry name" value="CSC1/OSCA1-like_7TM"/>
</dbReference>
<dbReference type="InterPro" id="IPR027815">
    <property type="entry name" value="CSC1/OSCA1-like_cyt"/>
</dbReference>
<dbReference type="InterPro" id="IPR032880">
    <property type="entry name" value="Csc1/OSCA1-like_N"/>
</dbReference>
<dbReference type="InterPro" id="IPR012677">
    <property type="entry name" value="Nucleotide-bd_a/b_plait_sf"/>
</dbReference>
<dbReference type="InterPro" id="IPR035979">
    <property type="entry name" value="RBD_domain_sf"/>
</dbReference>
<dbReference type="PANTHER" id="PTHR13018:SF24">
    <property type="entry name" value="CSC1-LIKE PROTEIN 1"/>
    <property type="match status" value="1"/>
</dbReference>
<dbReference type="PANTHER" id="PTHR13018">
    <property type="entry name" value="PROBABLE MEMBRANE PROTEIN DUF221-RELATED"/>
    <property type="match status" value="1"/>
</dbReference>
<dbReference type="Pfam" id="PF14703">
    <property type="entry name" value="PHM7_cyt"/>
    <property type="match status" value="1"/>
</dbReference>
<dbReference type="Pfam" id="PF02714">
    <property type="entry name" value="RSN1_7TM"/>
    <property type="match status" value="1"/>
</dbReference>
<dbReference type="Pfam" id="PF13967">
    <property type="entry name" value="RSN1_TM"/>
    <property type="match status" value="1"/>
</dbReference>
<dbReference type="SUPFAM" id="SSF54928">
    <property type="entry name" value="RNA-binding domain, RBD"/>
    <property type="match status" value="1"/>
</dbReference>
<feature type="chain" id="PRO_0000280726" description="Mechanosensitive cation channel TMEM63A">
    <location>
        <begin position="1"/>
        <end position="804"/>
    </location>
</feature>
<feature type="topological domain" description="Extracellular" evidence="1">
    <location>
        <begin position="1"/>
        <end position="51"/>
    </location>
</feature>
<feature type="transmembrane region" description="Helical; Name=TM0" evidence="1">
    <location>
        <begin position="52"/>
        <end position="74"/>
    </location>
</feature>
<feature type="topological domain" description="Cytoplasmic" evidence="1">
    <location>
        <begin position="75"/>
        <end position="133"/>
    </location>
</feature>
<feature type="transmembrane region" description="Helical; Name=TM1" evidence="1">
    <location>
        <begin position="134"/>
        <end position="166"/>
    </location>
</feature>
<feature type="topological domain" description="Extracellular" evidence="1">
    <location>
        <begin position="167"/>
        <end position="190"/>
    </location>
</feature>
<feature type="transmembrane region" description="Helical; Name=TM2" evidence="1">
    <location>
        <begin position="191"/>
        <end position="216"/>
    </location>
</feature>
<feature type="topological domain" description="Cytoplasmic" evidence="1">
    <location>
        <begin position="217"/>
        <end position="415"/>
    </location>
</feature>
<feature type="transmembrane region" description="Helical; Name=TM3" evidence="1">
    <location>
        <begin position="416"/>
        <end position="443"/>
    </location>
</feature>
<feature type="topological domain" description="Extracellular" evidence="1">
    <location>
        <begin position="444"/>
        <end position="461"/>
    </location>
</feature>
<feature type="transmembrane region" description="Helical; Name=TM4" evidence="1">
    <location>
        <begin position="462"/>
        <end position="489"/>
    </location>
</feature>
<feature type="topological domain" description="Cytoplasmic" evidence="1">
    <location>
        <begin position="490"/>
        <end position="494"/>
    </location>
</feature>
<feature type="transmembrane region" description="Helical; Name=TM5" evidence="1">
    <location>
        <begin position="495"/>
        <end position="531"/>
    </location>
</feature>
<feature type="topological domain" description="Extracellular" evidence="1">
    <location>
        <begin position="532"/>
        <end position="553"/>
    </location>
</feature>
<feature type="transmembrane region" description="Helical; Name=TM6" evidence="1">
    <location>
        <begin position="554"/>
        <end position="585"/>
    </location>
</feature>
<feature type="topological domain" description="Cytoplasmic" evidence="1">
    <location>
        <begin position="586"/>
        <end position="605"/>
    </location>
</feature>
<feature type="transmembrane region" description="Helical; Name=TM7" evidence="1">
    <location>
        <begin position="606"/>
        <end position="623"/>
    </location>
</feature>
<feature type="topological domain" description="Extracellular" evidence="1">
    <location>
        <begin position="624"/>
        <end position="627"/>
    </location>
</feature>
<feature type="transmembrane region" description="Helical; Name=TM8" evidence="1">
    <location>
        <begin position="628"/>
        <end position="650"/>
    </location>
</feature>
<feature type="topological domain" description="Cytoplasmic" evidence="1">
    <location>
        <begin position="651"/>
        <end position="660"/>
    </location>
</feature>
<feature type="transmembrane region" description="Helical; Name=TM9" evidence="1">
    <location>
        <begin position="661"/>
        <end position="688"/>
    </location>
</feature>
<feature type="topological domain" description="Extracellular" evidence="1">
    <location>
        <begin position="689"/>
        <end position="693"/>
    </location>
</feature>
<feature type="transmembrane region" description="Helical; Name=TM10" evidence="1">
    <location>
        <begin position="694"/>
        <end position="708"/>
    </location>
</feature>
<feature type="topological domain" description="Cytoplasmic" evidence="1">
    <location>
        <begin position="709"/>
        <end position="804"/>
    </location>
</feature>
<feature type="region of interest" description="Intracellular linker IL2; confers mechanosensitivity" evidence="1">
    <location>
        <begin position="218"/>
        <end position="413"/>
    </location>
</feature>
<feature type="region of interest" description="Gating helix" evidence="1">
    <location>
        <begin position="554"/>
        <end position="585"/>
    </location>
</feature>
<feature type="modified residue" description="Phosphoserine" evidence="16">
    <location>
        <position position="738"/>
    </location>
</feature>
<feature type="glycosylation site" description="N-linked (GlcNAc...) asparagine" evidence="3">
    <location>
        <position position="38"/>
    </location>
</feature>
<feature type="glycosylation site" description="N-linked (GlcNAc...) asparagine" evidence="3">
    <location>
        <position position="449"/>
    </location>
</feature>
<feature type="mutagenesis site" description="Converts the channel into a constitutively active phospholipid scramblase." evidence="10">
    <original>W</original>
    <variation>K</variation>
    <location>
        <position position="472"/>
    </location>
</feature>
<feature type="mutagenesis site" description="Converts the channel into a constitutively active phospholipid scramblase." evidence="10">
    <original>S</original>
    <variation>K</variation>
    <location>
        <position position="475"/>
    </location>
</feature>
<feature type="mutagenesis site" description="Does not convert the channel into a phospholipid scramblase." evidence="10">
    <original>A</original>
    <variation>K</variation>
    <location>
        <position position="476"/>
    </location>
</feature>
<evidence type="ECO:0000250" key="1">
    <source>
        <dbReference type="UniProtKB" id="O94886"/>
    </source>
</evidence>
<evidence type="ECO:0000255" key="2"/>
<evidence type="ECO:0000255" key="3">
    <source>
        <dbReference type="PROSITE-ProRule" id="PRU00498"/>
    </source>
</evidence>
<evidence type="ECO:0000269" key="4">
    <source>
    </source>
</evidence>
<evidence type="ECO:0000269" key="5">
    <source>
    </source>
</evidence>
<evidence type="ECO:0000269" key="6">
    <source>
    </source>
</evidence>
<evidence type="ECO:0000269" key="7">
    <source>
    </source>
</evidence>
<evidence type="ECO:0000269" key="8">
    <source>
    </source>
</evidence>
<evidence type="ECO:0000269" key="9">
    <source>
    </source>
</evidence>
<evidence type="ECO:0000269" key="10">
    <source>
    </source>
</evidence>
<evidence type="ECO:0000303" key="11">
    <source>
    </source>
</evidence>
<evidence type="ECO:0000303" key="12">
    <source>
    </source>
</evidence>
<evidence type="ECO:0000305" key="13"/>
<evidence type="ECO:0000305" key="14">
    <source>
    </source>
</evidence>
<evidence type="ECO:0000312" key="15">
    <source>
        <dbReference type="MGI" id="MGI:2384789"/>
    </source>
</evidence>
<evidence type="ECO:0007744" key="16">
    <source>
    </source>
</evidence>
<proteinExistence type="evidence at protein level"/>
<keyword id="KW-0106">Calcium</keyword>
<keyword id="KW-1003">Cell membrane</keyword>
<keyword id="KW-0967">Endosome</keyword>
<keyword id="KW-0325">Glycoprotein</keyword>
<keyword id="KW-0407">Ion channel</keyword>
<keyword id="KW-0406">Ion transport</keyword>
<keyword id="KW-0458">Lysosome</keyword>
<keyword id="KW-0472">Membrane</keyword>
<keyword id="KW-0597">Phosphoprotein</keyword>
<keyword id="KW-1185">Reference proteome</keyword>
<keyword id="KW-0812">Transmembrane</keyword>
<keyword id="KW-1133">Transmembrane helix</keyword>
<keyword id="KW-0813">Transport</keyword>